<accession>P75763</accession>
<reference key="1">
    <citation type="journal article" date="1996" name="DNA Res.">
        <title>A 718-kb DNA sequence of the Escherichia coli K-12 genome corresponding to the 12.7-28.0 min region on the linkage map.</title>
        <authorList>
            <person name="Oshima T."/>
            <person name="Aiba H."/>
            <person name="Baba T."/>
            <person name="Fujita K."/>
            <person name="Hayashi K."/>
            <person name="Honjo A."/>
            <person name="Ikemoto K."/>
            <person name="Inada T."/>
            <person name="Itoh T."/>
            <person name="Kajihara M."/>
            <person name="Kanai K."/>
            <person name="Kashimoto K."/>
            <person name="Kimura S."/>
            <person name="Kitagawa M."/>
            <person name="Makino K."/>
            <person name="Masuda S."/>
            <person name="Miki T."/>
            <person name="Mizobuchi K."/>
            <person name="Mori H."/>
            <person name="Motomura K."/>
            <person name="Nakamura Y."/>
            <person name="Nashimoto H."/>
            <person name="Nishio Y."/>
            <person name="Saito N."/>
            <person name="Sampei G."/>
            <person name="Seki Y."/>
            <person name="Tagami H."/>
            <person name="Takemoto K."/>
            <person name="Wada C."/>
            <person name="Yamamoto Y."/>
            <person name="Yano M."/>
            <person name="Horiuchi T."/>
        </authorList>
    </citation>
    <scope>NUCLEOTIDE SEQUENCE [LARGE SCALE GENOMIC DNA]</scope>
    <source>
        <strain>K12 / W3110 / ATCC 27325 / DSM 5911</strain>
    </source>
</reference>
<reference key="2">
    <citation type="journal article" date="1997" name="Science">
        <title>The complete genome sequence of Escherichia coli K-12.</title>
        <authorList>
            <person name="Blattner F.R."/>
            <person name="Plunkett G. III"/>
            <person name="Bloch C.A."/>
            <person name="Perna N.T."/>
            <person name="Burland V."/>
            <person name="Riley M."/>
            <person name="Collado-Vides J."/>
            <person name="Glasner J.D."/>
            <person name="Rode C.K."/>
            <person name="Mayhew G.F."/>
            <person name="Gregor J."/>
            <person name="Davis N.W."/>
            <person name="Kirkpatrick H.A."/>
            <person name="Goeden M.A."/>
            <person name="Rose D.J."/>
            <person name="Mau B."/>
            <person name="Shao Y."/>
        </authorList>
    </citation>
    <scope>NUCLEOTIDE SEQUENCE [LARGE SCALE GENOMIC DNA]</scope>
    <source>
        <strain>K12 / MG1655 / ATCC 47076</strain>
    </source>
</reference>
<reference key="3">
    <citation type="journal article" date="2006" name="Mol. Syst. Biol.">
        <title>Highly accurate genome sequences of Escherichia coli K-12 strains MG1655 and W3110.</title>
        <authorList>
            <person name="Hayashi K."/>
            <person name="Morooka N."/>
            <person name="Yamamoto Y."/>
            <person name="Fujita K."/>
            <person name="Isono K."/>
            <person name="Choi S."/>
            <person name="Ohtsubo E."/>
            <person name="Baba T."/>
            <person name="Wanner B.L."/>
            <person name="Mori H."/>
            <person name="Horiuchi T."/>
        </authorList>
    </citation>
    <scope>NUCLEOTIDE SEQUENCE [LARGE SCALE GENOMIC DNA]</scope>
    <source>
        <strain>K12 / W3110 / ATCC 27325 / DSM 5911</strain>
    </source>
</reference>
<reference key="4">
    <citation type="journal article" date="2005" name="Science">
        <title>Global topology analysis of the Escherichia coli inner membrane proteome.</title>
        <authorList>
            <person name="Daley D.O."/>
            <person name="Rapp M."/>
            <person name="Granseth E."/>
            <person name="Melen K."/>
            <person name="Drew D."/>
            <person name="von Heijne G."/>
        </authorList>
    </citation>
    <scope>TOPOLOGY [LARGE SCALE ANALYSIS]</scope>
    <source>
        <strain>K12 / MG1655 / ATCC 47076</strain>
    </source>
</reference>
<feature type="chain" id="PRO_0000172523" description="Inner membrane protein YbhI">
    <location>
        <begin position="1"/>
        <end position="477"/>
    </location>
</feature>
<feature type="topological domain" description="Cytoplasmic" evidence="1">
    <location>
        <begin position="1"/>
        <end position="5"/>
    </location>
</feature>
<feature type="transmembrane region" description="Helical" evidence="1">
    <location>
        <begin position="6"/>
        <end position="26"/>
    </location>
</feature>
<feature type="topological domain" description="Periplasmic" evidence="1">
    <location>
        <position position="27"/>
    </location>
</feature>
<feature type="transmembrane region" description="Helical" evidence="1">
    <location>
        <begin position="28"/>
        <end position="48"/>
    </location>
</feature>
<feature type="topological domain" description="Cytoplasmic" evidence="1">
    <location>
        <begin position="49"/>
        <end position="50"/>
    </location>
</feature>
<feature type="transmembrane region" description="Helical" evidence="1">
    <location>
        <begin position="51"/>
        <end position="71"/>
    </location>
</feature>
<feature type="topological domain" description="Periplasmic" evidence="1">
    <location>
        <begin position="72"/>
        <end position="87"/>
    </location>
</feature>
<feature type="transmembrane region" description="Helical" evidence="1">
    <location>
        <begin position="88"/>
        <end position="108"/>
    </location>
</feature>
<feature type="topological domain" description="Cytoplasmic" evidence="1">
    <location>
        <begin position="109"/>
        <end position="148"/>
    </location>
</feature>
<feature type="transmembrane region" description="Helical" evidence="1">
    <location>
        <begin position="149"/>
        <end position="169"/>
    </location>
</feature>
<feature type="topological domain" description="Periplasmic" evidence="1">
    <location>
        <begin position="170"/>
        <end position="219"/>
    </location>
</feature>
<feature type="transmembrane region" description="Helical" evidence="1">
    <location>
        <begin position="220"/>
        <end position="240"/>
    </location>
</feature>
<feature type="topological domain" description="Cytoplasmic" evidence="1">
    <location>
        <begin position="241"/>
        <end position="272"/>
    </location>
</feature>
<feature type="transmembrane region" description="Helical" evidence="1">
    <location>
        <begin position="273"/>
        <end position="293"/>
    </location>
</feature>
<feature type="topological domain" description="Periplasmic" evidence="1">
    <location>
        <begin position="294"/>
        <end position="297"/>
    </location>
</feature>
<feature type="transmembrane region" description="Helical" evidence="1">
    <location>
        <begin position="298"/>
        <end position="318"/>
    </location>
</feature>
<feature type="topological domain" description="Cytoplasmic" evidence="1">
    <location>
        <begin position="319"/>
        <end position="356"/>
    </location>
</feature>
<feature type="transmembrane region" description="Helical" evidence="1">
    <location>
        <begin position="357"/>
        <end position="377"/>
    </location>
</feature>
<feature type="topological domain" description="Periplasmic" evidence="1">
    <location>
        <position position="378"/>
    </location>
</feature>
<feature type="transmembrane region" description="Helical" evidence="1">
    <location>
        <begin position="379"/>
        <end position="399"/>
    </location>
</feature>
<feature type="topological domain" description="Cytoplasmic" evidence="1">
    <location>
        <begin position="400"/>
        <end position="445"/>
    </location>
</feature>
<feature type="transmembrane region" description="Helical" evidence="1">
    <location>
        <begin position="446"/>
        <end position="466"/>
    </location>
</feature>
<feature type="topological domain" description="Periplasmic" evidence="1">
    <location>
        <begin position="467"/>
        <end position="477"/>
    </location>
</feature>
<name>YBHI_ECOLI</name>
<dbReference type="EMBL" id="U00096">
    <property type="protein sequence ID" value="AAC73857.1"/>
    <property type="molecule type" value="Genomic_DNA"/>
</dbReference>
<dbReference type="EMBL" id="AP009048">
    <property type="protein sequence ID" value="BAA35434.1"/>
    <property type="molecule type" value="Genomic_DNA"/>
</dbReference>
<dbReference type="PIR" id="B64813">
    <property type="entry name" value="B64813"/>
</dbReference>
<dbReference type="RefSeq" id="NP_415291.1">
    <property type="nucleotide sequence ID" value="NC_000913.3"/>
</dbReference>
<dbReference type="RefSeq" id="WP_001036475.1">
    <property type="nucleotide sequence ID" value="NZ_STEB01000028.1"/>
</dbReference>
<dbReference type="SMR" id="P75763"/>
<dbReference type="BioGRID" id="4261842">
    <property type="interactions" value="134"/>
</dbReference>
<dbReference type="FunCoup" id="P75763">
    <property type="interactions" value="265"/>
</dbReference>
<dbReference type="STRING" id="511145.b0770"/>
<dbReference type="TCDB" id="2.A.47.3.5">
    <property type="family name" value="the divalent anion:na(+) symporter (dass) family"/>
</dbReference>
<dbReference type="PaxDb" id="511145-b0770"/>
<dbReference type="EnsemblBacteria" id="AAC73857">
    <property type="protein sequence ID" value="AAC73857"/>
    <property type="gene ID" value="b0770"/>
</dbReference>
<dbReference type="GeneID" id="945377"/>
<dbReference type="KEGG" id="ecj:JW0753"/>
<dbReference type="KEGG" id="eco:b0770"/>
<dbReference type="KEGG" id="ecoc:C3026_03905"/>
<dbReference type="PATRIC" id="fig|1411691.4.peg.1508"/>
<dbReference type="EchoBASE" id="EB3429"/>
<dbReference type="eggNOG" id="COG0471">
    <property type="taxonomic scope" value="Bacteria"/>
</dbReference>
<dbReference type="HOGENOM" id="CLU_005170_7_3_6"/>
<dbReference type="InParanoid" id="P75763"/>
<dbReference type="OMA" id="VPLATWW"/>
<dbReference type="OrthoDB" id="3170849at2"/>
<dbReference type="PhylomeDB" id="P75763"/>
<dbReference type="BioCyc" id="EcoCyc:B0770-MONOMER"/>
<dbReference type="PRO" id="PR:P75763"/>
<dbReference type="Proteomes" id="UP000000625">
    <property type="component" value="Chromosome"/>
</dbReference>
<dbReference type="GO" id="GO:0005886">
    <property type="term" value="C:plasma membrane"/>
    <property type="evidence" value="ECO:0000314"/>
    <property type="project" value="EcoCyc"/>
</dbReference>
<dbReference type="GO" id="GO:0022857">
    <property type="term" value="F:transmembrane transporter activity"/>
    <property type="evidence" value="ECO:0007669"/>
    <property type="project" value="InterPro"/>
</dbReference>
<dbReference type="InterPro" id="IPR030676">
    <property type="entry name" value="CitT-rel"/>
</dbReference>
<dbReference type="InterPro" id="IPR001898">
    <property type="entry name" value="SLC13A/DASS"/>
</dbReference>
<dbReference type="NCBIfam" id="TIGR00785">
    <property type="entry name" value="dass"/>
    <property type="match status" value="1"/>
</dbReference>
<dbReference type="PANTHER" id="PTHR42826">
    <property type="entry name" value="DICARBOXYLATE TRANSPORTER 2.1, CHLOROPLASTIC"/>
    <property type="match status" value="1"/>
</dbReference>
<dbReference type="Pfam" id="PF00939">
    <property type="entry name" value="Na_sulph_symp"/>
    <property type="match status" value="1"/>
</dbReference>
<dbReference type="PIRSF" id="PIRSF002457">
    <property type="entry name" value="DASS"/>
    <property type="match status" value="1"/>
</dbReference>
<sequence>MNKKSLWKLILILAIPCIIGFMPAPAGLSELAWVLFGIYLAAIVGLVIKPFPEPVVLLIAVAASMVVVGNLSDGAFKTTAVLSGYSSGTTWLVFSAFTLSAAFVTTGLGKRIAYLLIGKIGNTTLGLGYVTVFLDLVLAPATPSNTARAGGIVLPIINSVAVALGSEPEKSPRRVGHYLMMSIYMVTKTTSYMFFTAMAGNILALKMINDILHLQISWGGWALAAGLPGIIMLLVTPLVIYTMYPPEIKKVDNKTIAKAGLAELGPMKIREKMLLGVFVLALLGWIFSKSLGVDESTVAIVVMATMLLLGIVTWEDVVKNKGGWNTLIWYGGIIGLSSLLSKVKFFEWLAEVFKNNLAFDGHGNVAFFVIIFLSIIVRYFFASGSAYIVAMLPVFAMLANVSGAPLMLTALALLFSNSYGGMVTHYGGAAGPVIFGVGYNDIKSWWLVGAVLTILTFLVHITLGVWWWNMLIGWNML</sequence>
<proteinExistence type="evidence at protein level"/>
<gene>
    <name type="primary">ybhI</name>
    <name type="ordered locus">b0770</name>
    <name type="ordered locus">JW0753</name>
</gene>
<keyword id="KW-0997">Cell inner membrane</keyword>
<keyword id="KW-1003">Cell membrane</keyword>
<keyword id="KW-0472">Membrane</keyword>
<keyword id="KW-1185">Reference proteome</keyword>
<keyword id="KW-0812">Transmembrane</keyword>
<keyword id="KW-1133">Transmembrane helix</keyword>
<keyword id="KW-0813">Transport</keyword>
<protein>
    <recommendedName>
        <fullName>Inner membrane protein YbhI</fullName>
    </recommendedName>
</protein>
<evidence type="ECO:0000255" key="1"/>
<evidence type="ECO:0000305" key="2"/>
<organism>
    <name type="scientific">Escherichia coli (strain K12)</name>
    <dbReference type="NCBI Taxonomy" id="83333"/>
    <lineage>
        <taxon>Bacteria</taxon>
        <taxon>Pseudomonadati</taxon>
        <taxon>Pseudomonadota</taxon>
        <taxon>Gammaproteobacteria</taxon>
        <taxon>Enterobacterales</taxon>
        <taxon>Enterobacteriaceae</taxon>
        <taxon>Escherichia</taxon>
    </lineage>
</organism>
<comment type="subcellular location">
    <subcellularLocation>
        <location>Cell inner membrane</location>
        <topology>Multi-pass membrane protein</topology>
    </subcellularLocation>
</comment>
<comment type="similarity">
    <text evidence="2">Belongs to the SLC13A/DASS transporter (TC 2.A.47) family. DIT1 subfamily.</text>
</comment>